<proteinExistence type="inferred from homology"/>
<accession>Q95000</accession>
<dbReference type="EC" id="3.1.1.8"/>
<dbReference type="EMBL" id="U74378">
    <property type="protein sequence ID" value="AAB18262.1"/>
    <property type="molecule type" value="Genomic_DNA"/>
</dbReference>
<dbReference type="SMR" id="Q95000"/>
<dbReference type="MEROPS" id="S09.980"/>
<dbReference type="GO" id="GO:0005615">
    <property type="term" value="C:extracellular space"/>
    <property type="evidence" value="ECO:0007669"/>
    <property type="project" value="TreeGrafter"/>
</dbReference>
<dbReference type="GO" id="GO:0005886">
    <property type="term" value="C:plasma membrane"/>
    <property type="evidence" value="ECO:0007669"/>
    <property type="project" value="TreeGrafter"/>
</dbReference>
<dbReference type="GO" id="GO:0003990">
    <property type="term" value="F:acetylcholinesterase activity"/>
    <property type="evidence" value="ECO:0007669"/>
    <property type="project" value="TreeGrafter"/>
</dbReference>
<dbReference type="GO" id="GO:0006581">
    <property type="term" value="P:acetylcholine catabolic process"/>
    <property type="evidence" value="ECO:0007669"/>
    <property type="project" value="TreeGrafter"/>
</dbReference>
<dbReference type="GO" id="GO:0019695">
    <property type="term" value="P:choline metabolic process"/>
    <property type="evidence" value="ECO:0007669"/>
    <property type="project" value="TreeGrafter"/>
</dbReference>
<dbReference type="FunFam" id="3.40.50.1820:FF:000029">
    <property type="entry name" value="Acetylcholinesterase"/>
    <property type="match status" value="1"/>
</dbReference>
<dbReference type="Gene3D" id="3.40.50.1820">
    <property type="entry name" value="alpha/beta hydrolase"/>
    <property type="match status" value="1"/>
</dbReference>
<dbReference type="InterPro" id="IPR029058">
    <property type="entry name" value="AB_hydrolase_fold"/>
</dbReference>
<dbReference type="InterPro" id="IPR050654">
    <property type="entry name" value="AChE-related_enzymes"/>
</dbReference>
<dbReference type="InterPro" id="IPR002018">
    <property type="entry name" value="CarbesteraseB"/>
</dbReference>
<dbReference type="InterPro" id="IPR019826">
    <property type="entry name" value="Carboxylesterase_B_AS"/>
</dbReference>
<dbReference type="InterPro" id="IPR019819">
    <property type="entry name" value="Carboxylesterase_B_CS"/>
</dbReference>
<dbReference type="InterPro" id="IPR000997">
    <property type="entry name" value="Cholinesterase"/>
</dbReference>
<dbReference type="PANTHER" id="PTHR43918">
    <property type="entry name" value="ACETYLCHOLINESTERASE"/>
    <property type="match status" value="1"/>
</dbReference>
<dbReference type="PANTHER" id="PTHR43918:SF12">
    <property type="entry name" value="ACETYLCHOLINESTERASE 1"/>
    <property type="match status" value="1"/>
</dbReference>
<dbReference type="Pfam" id="PF00135">
    <property type="entry name" value="COesterase"/>
    <property type="match status" value="1"/>
</dbReference>
<dbReference type="PRINTS" id="PR00878">
    <property type="entry name" value="CHOLNESTRASE"/>
</dbReference>
<dbReference type="SUPFAM" id="SSF53474">
    <property type="entry name" value="alpha/beta-Hydrolases"/>
    <property type="match status" value="1"/>
</dbReference>
<dbReference type="PROSITE" id="PS00122">
    <property type="entry name" value="CARBOXYLESTERASE_B_1"/>
    <property type="match status" value="1"/>
</dbReference>
<dbReference type="PROSITE" id="PS00941">
    <property type="entry name" value="CARBOXYLESTERASE_B_2"/>
    <property type="match status" value="1"/>
</dbReference>
<reference key="1">
    <citation type="journal article" date="1997" name="J. Exp. Zool.">
        <title>Two cholinesterase activities and genes are present in amphioxus.</title>
        <authorList>
            <person name="Sutherland D."/>
            <person name="McClellan J.S."/>
            <person name="Milner D."/>
            <person name="Soong W."/>
            <person name="Axon N."/>
            <person name="Sanders M."/>
            <person name="Hester A."/>
            <person name="Kao Y.H."/>
            <person name="Poczatek T."/>
            <person name="Routt S."/>
            <person name="Pezzementi L."/>
        </authorList>
    </citation>
    <scope>NUCLEOTIDE SEQUENCE [GENOMIC DNA]</scope>
</reference>
<comment type="catalytic activity">
    <reaction>
        <text>an acylcholine + H2O = a carboxylate + choline + H(+)</text>
        <dbReference type="Rhea" id="RHEA:21964"/>
        <dbReference type="ChEBI" id="CHEBI:15354"/>
        <dbReference type="ChEBI" id="CHEBI:15377"/>
        <dbReference type="ChEBI" id="CHEBI:15378"/>
        <dbReference type="ChEBI" id="CHEBI:29067"/>
        <dbReference type="ChEBI" id="CHEBI:35287"/>
        <dbReference type="EC" id="3.1.1.8"/>
    </reaction>
</comment>
<comment type="similarity">
    <text evidence="3">Belongs to the type-B carboxylesterase/lipase family.</text>
</comment>
<sequence length="357" mass="39462">TPISEDCLYLNVWQPSPAPTGATVLVWIYGGGFFSGTSSLDVYDGRYLARMEDVVVVSMNYRLGALGFLYTGSEAAPGNAGLLDQHLALQWVQQNIQSFGGDPGKVTIFGESAGAASVNFHMLSPMSRDLFQRAMMHSASALAPWAVTPSEQARQRSKALAIDIGCSADEEDMDVLVACLREVSAQTILDHEWNVVDLSDAHFLADIPFPPVKDGRFITEDPAEMYAAGNFKDIDILVGFVKDEGNFWLVYGVPGFDKDTDSIIDRETFVGDIVFCHPRLNDITVERTAFEYTDWLHMDQDTMYRDALDSVFGDPFFVCPTMAVGKAHVNHGRTAYVYEFAQVASNLAWPHWMGAMH</sequence>
<keyword id="KW-1015">Disulfide bond</keyword>
<keyword id="KW-0378">Hydrolase</keyword>
<keyword id="KW-0719">Serine esterase</keyword>
<evidence type="ECO:0000250" key="1"/>
<evidence type="ECO:0000255" key="2">
    <source>
        <dbReference type="PROSITE-ProRule" id="PRU10039"/>
    </source>
</evidence>
<evidence type="ECO:0000305" key="3"/>
<name>CHLE1_BRALA</name>
<gene>
    <name type="primary">CHE1</name>
</gene>
<protein>
    <recommendedName>
        <fullName>Cholinesterase 1</fullName>
        <ecNumber>3.1.1.8</ecNumber>
    </recommendedName>
</protein>
<organism>
    <name type="scientific">Branchiostoma lanceolatum</name>
    <name type="common">Common lancelet</name>
    <name type="synonym">Amphioxus lanceolatum</name>
    <dbReference type="NCBI Taxonomy" id="7740"/>
    <lineage>
        <taxon>Eukaryota</taxon>
        <taxon>Metazoa</taxon>
        <taxon>Chordata</taxon>
        <taxon>Cephalochordata</taxon>
        <taxon>Leptocardii</taxon>
        <taxon>Amphioxiformes</taxon>
        <taxon>Branchiostomatidae</taxon>
        <taxon>Branchiostoma</taxon>
    </lineage>
</organism>
<feature type="chain" id="PRO_0000070289" description="Cholinesterase 1">
    <location>
        <begin position="1" status="less than"/>
        <end position="357" status="greater than"/>
    </location>
</feature>
<feature type="active site" description="Acyl-ester intermediate" evidence="2">
    <location>
        <position position="112"/>
    </location>
</feature>
<feature type="active site" description="Charge relay system" evidence="1">
    <location>
        <position position="244"/>
    </location>
</feature>
<feature type="active site" description="Charge relay system" evidence="1">
    <location>
        <position position="357"/>
    </location>
</feature>
<feature type="disulfide bond" evidence="1">
    <location>
        <begin position="166"/>
        <end position="179"/>
    </location>
</feature>
<feature type="non-terminal residue">
    <location>
        <position position="1"/>
    </location>
</feature>
<feature type="non-terminal residue">
    <location>
        <position position="357"/>
    </location>
</feature>